<reference key="1">
    <citation type="journal article" date="2001" name="Biochem. Biophys. Res. Commun.">
        <title>Negative regulation of filamentous growth and flocculation by Lkh1, a fission yeast LAMMER kinase homolog.</title>
        <authorList>
            <person name="Kim K.-H."/>
            <person name="Cho Y.-M."/>
            <person name="Kang W.-H."/>
            <person name="Kim J.-H."/>
            <person name="Byun K.-H."/>
            <person name="Park Y.-D."/>
            <person name="Bae K.-S."/>
            <person name="Park H.-M."/>
        </authorList>
    </citation>
    <scope>NUCLEOTIDE SEQUENCE [MRNA]</scope>
    <scope>FUNCTION</scope>
</reference>
<reference key="2">
    <citation type="journal article" date="2003" name="Exp. Cell Res.">
        <title>The kic1 kinase of schizosaccharomyces pombe is a CLK/STY orthologue that regulates cell-cell separation.</title>
        <authorList>
            <person name="Tang Z."/>
            <person name="Mandel L.L."/>
            <person name="Yean S.-L."/>
            <person name="Lin C.X."/>
            <person name="Chen T."/>
            <person name="Yanagida M."/>
            <person name="Lin R.-J."/>
        </authorList>
    </citation>
    <scope>NUCLEOTIDE SEQUENCE [MRNA]</scope>
    <scope>FUNCTION</scope>
    <scope>AUTOPHOSPHORYLATION</scope>
</reference>
<reference key="3">
    <citation type="journal article" date="2002" name="Nature">
        <title>The genome sequence of Schizosaccharomyces pombe.</title>
        <authorList>
            <person name="Wood V."/>
            <person name="Gwilliam R."/>
            <person name="Rajandream M.A."/>
            <person name="Lyne M.H."/>
            <person name="Lyne R."/>
            <person name="Stewart A."/>
            <person name="Sgouros J.G."/>
            <person name="Peat N."/>
            <person name="Hayles J."/>
            <person name="Baker S.G."/>
            <person name="Basham D."/>
            <person name="Bowman S."/>
            <person name="Brooks K."/>
            <person name="Brown D."/>
            <person name="Brown S."/>
            <person name="Chillingworth T."/>
            <person name="Churcher C.M."/>
            <person name="Collins M."/>
            <person name="Connor R."/>
            <person name="Cronin A."/>
            <person name="Davis P."/>
            <person name="Feltwell T."/>
            <person name="Fraser A."/>
            <person name="Gentles S."/>
            <person name="Goble A."/>
            <person name="Hamlin N."/>
            <person name="Harris D.E."/>
            <person name="Hidalgo J."/>
            <person name="Hodgson G."/>
            <person name="Holroyd S."/>
            <person name="Hornsby T."/>
            <person name="Howarth S."/>
            <person name="Huckle E.J."/>
            <person name="Hunt S."/>
            <person name="Jagels K."/>
            <person name="James K.D."/>
            <person name="Jones L."/>
            <person name="Jones M."/>
            <person name="Leather S."/>
            <person name="McDonald S."/>
            <person name="McLean J."/>
            <person name="Mooney P."/>
            <person name="Moule S."/>
            <person name="Mungall K.L."/>
            <person name="Murphy L.D."/>
            <person name="Niblett D."/>
            <person name="Odell C."/>
            <person name="Oliver K."/>
            <person name="O'Neil S."/>
            <person name="Pearson D."/>
            <person name="Quail M.A."/>
            <person name="Rabbinowitsch E."/>
            <person name="Rutherford K.M."/>
            <person name="Rutter S."/>
            <person name="Saunders D."/>
            <person name="Seeger K."/>
            <person name="Sharp S."/>
            <person name="Skelton J."/>
            <person name="Simmonds M.N."/>
            <person name="Squares R."/>
            <person name="Squares S."/>
            <person name="Stevens K."/>
            <person name="Taylor K."/>
            <person name="Taylor R.G."/>
            <person name="Tivey A."/>
            <person name="Walsh S.V."/>
            <person name="Warren T."/>
            <person name="Whitehead S."/>
            <person name="Woodward J.R."/>
            <person name="Volckaert G."/>
            <person name="Aert R."/>
            <person name="Robben J."/>
            <person name="Grymonprez B."/>
            <person name="Weltjens I."/>
            <person name="Vanstreels E."/>
            <person name="Rieger M."/>
            <person name="Schaefer M."/>
            <person name="Mueller-Auer S."/>
            <person name="Gabel C."/>
            <person name="Fuchs M."/>
            <person name="Duesterhoeft A."/>
            <person name="Fritzc C."/>
            <person name="Holzer E."/>
            <person name="Moestl D."/>
            <person name="Hilbert H."/>
            <person name="Borzym K."/>
            <person name="Langer I."/>
            <person name="Beck A."/>
            <person name="Lehrach H."/>
            <person name="Reinhardt R."/>
            <person name="Pohl T.M."/>
            <person name="Eger P."/>
            <person name="Zimmermann W."/>
            <person name="Wedler H."/>
            <person name="Wambutt R."/>
            <person name="Purnelle B."/>
            <person name="Goffeau A."/>
            <person name="Cadieu E."/>
            <person name="Dreano S."/>
            <person name="Gloux S."/>
            <person name="Lelaure V."/>
            <person name="Mottier S."/>
            <person name="Galibert F."/>
            <person name="Aves S.J."/>
            <person name="Xiang Z."/>
            <person name="Hunt C."/>
            <person name="Moore K."/>
            <person name="Hurst S.M."/>
            <person name="Lucas M."/>
            <person name="Rochet M."/>
            <person name="Gaillardin C."/>
            <person name="Tallada V.A."/>
            <person name="Garzon A."/>
            <person name="Thode G."/>
            <person name="Daga R.R."/>
            <person name="Cruzado L."/>
            <person name="Jimenez J."/>
            <person name="Sanchez M."/>
            <person name="del Rey F."/>
            <person name="Benito J."/>
            <person name="Dominguez A."/>
            <person name="Revuelta J.L."/>
            <person name="Moreno S."/>
            <person name="Armstrong J."/>
            <person name="Forsburg S.L."/>
            <person name="Cerutti L."/>
            <person name="Lowe T."/>
            <person name="McCombie W.R."/>
            <person name="Paulsen I."/>
            <person name="Potashkin J."/>
            <person name="Shpakovski G.V."/>
            <person name="Ussery D."/>
            <person name="Barrell B.G."/>
            <person name="Nurse P."/>
        </authorList>
    </citation>
    <scope>NUCLEOTIDE SEQUENCE [LARGE SCALE GENOMIC DNA]</scope>
    <source>
        <strain>972 / ATCC 24843</strain>
    </source>
</reference>
<feature type="chain" id="PRO_0000086236" description="Dual specificity protein kinase lkh1">
    <location>
        <begin position="1"/>
        <end position="690"/>
    </location>
</feature>
<feature type="domain" description="Protein kinase" evidence="1">
    <location>
        <begin position="362"/>
        <end position="682"/>
    </location>
</feature>
<feature type="region of interest" description="Disordered" evidence="3">
    <location>
        <begin position="39"/>
        <end position="70"/>
    </location>
</feature>
<feature type="active site" description="Proton acceptor" evidence="1 2">
    <location>
        <position position="488"/>
    </location>
</feature>
<feature type="binding site" evidence="1">
    <location>
        <begin position="368"/>
        <end position="376"/>
    </location>
    <ligand>
        <name>ATP</name>
        <dbReference type="ChEBI" id="CHEBI:30616"/>
    </ligand>
</feature>
<feature type="binding site" evidence="1">
    <location>
        <position position="391"/>
    </location>
    <ligand>
        <name>ATP</name>
        <dbReference type="ChEBI" id="CHEBI:30616"/>
    </ligand>
</feature>
<evidence type="ECO:0000255" key="1">
    <source>
        <dbReference type="PROSITE-ProRule" id="PRU00159"/>
    </source>
</evidence>
<evidence type="ECO:0000255" key="2">
    <source>
        <dbReference type="PROSITE-ProRule" id="PRU10027"/>
    </source>
</evidence>
<evidence type="ECO:0000256" key="3">
    <source>
        <dbReference type="SAM" id="MobiDB-lite"/>
    </source>
</evidence>
<evidence type="ECO:0000269" key="4">
    <source>
    </source>
</evidence>
<evidence type="ECO:0000269" key="5">
    <source>
    </source>
</evidence>
<evidence type="ECO:0000305" key="6"/>
<organism>
    <name type="scientific">Schizosaccharomyces pombe (strain 972 / ATCC 24843)</name>
    <name type="common">Fission yeast</name>
    <dbReference type="NCBI Taxonomy" id="284812"/>
    <lineage>
        <taxon>Eukaryota</taxon>
        <taxon>Fungi</taxon>
        <taxon>Dikarya</taxon>
        <taxon>Ascomycota</taxon>
        <taxon>Taphrinomycotina</taxon>
        <taxon>Schizosaccharomycetes</taxon>
        <taxon>Schizosaccharomycetales</taxon>
        <taxon>Schizosaccharomycetaceae</taxon>
        <taxon>Schizosaccharomyces</taxon>
    </lineage>
</organism>
<gene>
    <name type="primary">lkh1</name>
    <name type="synonym">kic1</name>
    <name type="ORF">SPAC1D4.11c</name>
</gene>
<sequence>MHSLKRRRNHAPDWQDFYKNGVPQEVIVIEDSASPRLTPNLPPPFSVHQLQSFVPPQPPSSSSPSTTGTVAVPINGANAVYPSTNSVSLPQSYDPWLDANGVVPLPHDVASHPSYMVQSPTSYHACSNNQSPFPHSHHPPLHNPLPVSCQPVLRPPPVPQVPSHWYPVSLPSPNLPHQPISKPPVIPNLPKLQVHPNRLPHPIHNHPYSSPTSYPPPLCPATYCPSNPPQLAPATAIAPSSQSSQHKSVNYSVTPSSINNHTAVPLSPTLAVWLPMTQPTFQPPSANVYQPASNANQVITPVSISDYRPPKKRKRAAWPPYKKVDRVNVPVVHDTTAFDPSTFDDDDGHYKVVPNSKFANRYTVVRLLGHGTFGKVIQCYDQSTGRHCAIKVTRAIPKYREASLIELRVLQTIAHSDPTNENKCIQLRDYFDYRKHICIVTDLFGWSVFDFLKNNNYIPFPLKHIQMLSQQLFKSVAFLHSLGLVHTDLKPENVLLVSNASRTIRLPYRNYSQKVLNSCEIRLIDFGSATFEDEYHSSVVSTRHYRAPEIILGLGWSYPCDVWSIGCILVELFTGQALFQTHEDSEHLCMMEKILGPFDRNMISRSSRTSQRFFKSDGKVRYPLSNTPKKSINYLQSLQTLEQIFAVSSPEVALLLDLLKKVFVYDPKRRITAKEALWHPFFTQPISSNL</sequence>
<protein>
    <recommendedName>
        <fullName>Dual specificity protein kinase lkh1</fullName>
        <ecNumber>2.7.12.1</ecNumber>
    </recommendedName>
</protein>
<accession>Q10156</accession>
<accession>Q9C3Y9</accession>
<keyword id="KW-0067">ATP-binding</keyword>
<keyword id="KW-0418">Kinase</keyword>
<keyword id="KW-0547">Nucleotide-binding</keyword>
<keyword id="KW-0597">Phosphoprotein</keyword>
<keyword id="KW-1185">Reference proteome</keyword>
<keyword id="KW-0723">Serine/threonine-protein kinase</keyword>
<keyword id="KW-0808">Transferase</keyword>
<keyword id="KW-0829">Tyrosine-protein kinase</keyword>
<proteinExistence type="evidence at protein level"/>
<comment type="function">
    <text evidence="4 5">Protein kinase that may act as a negative regulator of filamentous growth and flocculation. Appears to have a role in normal cell wall and septum formation and in cell separation. May have antagonistic function in the regulation of beta-glucan distribution between the sites for cell wall and septum assembly.</text>
</comment>
<comment type="catalytic activity">
    <reaction>
        <text>L-seryl-[protein] + ATP = O-phospho-L-seryl-[protein] + ADP + H(+)</text>
        <dbReference type="Rhea" id="RHEA:17989"/>
        <dbReference type="Rhea" id="RHEA-COMP:9863"/>
        <dbReference type="Rhea" id="RHEA-COMP:11604"/>
        <dbReference type="ChEBI" id="CHEBI:15378"/>
        <dbReference type="ChEBI" id="CHEBI:29999"/>
        <dbReference type="ChEBI" id="CHEBI:30616"/>
        <dbReference type="ChEBI" id="CHEBI:83421"/>
        <dbReference type="ChEBI" id="CHEBI:456216"/>
        <dbReference type="EC" id="2.7.12.1"/>
    </reaction>
</comment>
<comment type="catalytic activity">
    <reaction>
        <text>L-threonyl-[protein] + ATP = O-phospho-L-threonyl-[protein] + ADP + H(+)</text>
        <dbReference type="Rhea" id="RHEA:46608"/>
        <dbReference type="Rhea" id="RHEA-COMP:11060"/>
        <dbReference type="Rhea" id="RHEA-COMP:11605"/>
        <dbReference type="ChEBI" id="CHEBI:15378"/>
        <dbReference type="ChEBI" id="CHEBI:30013"/>
        <dbReference type="ChEBI" id="CHEBI:30616"/>
        <dbReference type="ChEBI" id="CHEBI:61977"/>
        <dbReference type="ChEBI" id="CHEBI:456216"/>
        <dbReference type="EC" id="2.7.12.1"/>
    </reaction>
</comment>
<comment type="catalytic activity">
    <reaction>
        <text>L-tyrosyl-[protein] + ATP = O-phospho-L-tyrosyl-[protein] + ADP + H(+)</text>
        <dbReference type="Rhea" id="RHEA:10596"/>
        <dbReference type="Rhea" id="RHEA-COMP:10136"/>
        <dbReference type="Rhea" id="RHEA-COMP:20101"/>
        <dbReference type="ChEBI" id="CHEBI:15378"/>
        <dbReference type="ChEBI" id="CHEBI:30616"/>
        <dbReference type="ChEBI" id="CHEBI:46858"/>
        <dbReference type="ChEBI" id="CHEBI:61978"/>
        <dbReference type="ChEBI" id="CHEBI:456216"/>
        <dbReference type="EC" id="2.7.12.1"/>
    </reaction>
</comment>
<comment type="interaction">
    <interactant intactId="EBI-7486409">
        <id>Q10156</id>
    </interactant>
    <interactant intactId="EBI-1562021">
        <id>O13759</id>
        <label>csx1</label>
    </interactant>
    <organismsDiffer>false</organismsDiffer>
    <experiments>3</experiments>
</comment>
<comment type="PTM">
    <text evidence="6">Autophosphorylates on all three types of residues.</text>
</comment>
<comment type="similarity">
    <text evidence="6">Belongs to the protein kinase superfamily. CMGC Ser/Thr protein kinase family. Lammer subfamily.</text>
</comment>
<comment type="sequence caution" evidence="6">
    <conflict type="erroneous initiation">
        <sequence resource="EMBL-CDS" id="AAK12335"/>
    </conflict>
</comment>
<name>LKH1_SCHPO</name>
<dbReference type="EC" id="2.7.12.1"/>
<dbReference type="EMBL" id="AF334941">
    <property type="protein sequence ID" value="AAK12335.1"/>
    <property type="status" value="ALT_INIT"/>
    <property type="molecule type" value="mRNA"/>
</dbReference>
<dbReference type="EMBL" id="CU329670">
    <property type="protein sequence ID" value="CAD29835.2"/>
    <property type="molecule type" value="Genomic_DNA"/>
</dbReference>
<dbReference type="PIR" id="JC7794">
    <property type="entry name" value="JC7794"/>
</dbReference>
<dbReference type="RefSeq" id="NP_001018187.2">
    <property type="nucleotide sequence ID" value="NM_001018423.3"/>
</dbReference>
<dbReference type="SMR" id="Q10156"/>
<dbReference type="BioGRID" id="280608">
    <property type="interactions" value="83"/>
</dbReference>
<dbReference type="FunCoup" id="Q10156">
    <property type="interactions" value="411"/>
</dbReference>
<dbReference type="IntAct" id="Q10156">
    <property type="interactions" value="2"/>
</dbReference>
<dbReference type="MINT" id="Q10156"/>
<dbReference type="STRING" id="284812.Q10156"/>
<dbReference type="iPTMnet" id="Q10156"/>
<dbReference type="PaxDb" id="4896-SPAC1D4.11c.1"/>
<dbReference type="EnsemblFungi" id="SPAC1D4.11c.1">
    <property type="protein sequence ID" value="SPAC1D4.11c.1:pep"/>
    <property type="gene ID" value="SPAC1D4.11c"/>
</dbReference>
<dbReference type="GeneID" id="3361532"/>
<dbReference type="KEGG" id="spo:3361532"/>
<dbReference type="PomBase" id="SPAC1D4.11c">
    <property type="gene designation" value="lkh1"/>
</dbReference>
<dbReference type="VEuPathDB" id="FungiDB:SPAC1D4.11c"/>
<dbReference type="eggNOG" id="KOG0671">
    <property type="taxonomic scope" value="Eukaryota"/>
</dbReference>
<dbReference type="HOGENOM" id="CLU_000288_5_7_1"/>
<dbReference type="InParanoid" id="Q10156"/>
<dbReference type="OMA" id="KHICIVT"/>
<dbReference type="PhylomeDB" id="Q10156"/>
<dbReference type="BRENDA" id="2.7.12.1">
    <property type="organism ID" value="5613"/>
</dbReference>
<dbReference type="PRO" id="PR:Q10156"/>
<dbReference type="Proteomes" id="UP000002485">
    <property type="component" value="Chromosome I"/>
</dbReference>
<dbReference type="GO" id="GO:0005634">
    <property type="term" value="C:nucleus"/>
    <property type="evidence" value="ECO:0000314"/>
    <property type="project" value="PomBase"/>
</dbReference>
<dbReference type="GO" id="GO:0005524">
    <property type="term" value="F:ATP binding"/>
    <property type="evidence" value="ECO:0007669"/>
    <property type="project" value="UniProtKB-KW"/>
</dbReference>
<dbReference type="GO" id="GO:0004672">
    <property type="term" value="F:protein kinase activity"/>
    <property type="evidence" value="ECO:0000314"/>
    <property type="project" value="PomBase"/>
</dbReference>
<dbReference type="GO" id="GO:0106310">
    <property type="term" value="F:protein serine kinase activity"/>
    <property type="evidence" value="ECO:0007669"/>
    <property type="project" value="RHEA"/>
</dbReference>
<dbReference type="GO" id="GO:0004674">
    <property type="term" value="F:protein serine/threonine kinase activity"/>
    <property type="evidence" value="ECO:0000314"/>
    <property type="project" value="PomBase"/>
</dbReference>
<dbReference type="GO" id="GO:0004712">
    <property type="term" value="F:protein serine/threonine/tyrosine kinase activity"/>
    <property type="evidence" value="ECO:0007669"/>
    <property type="project" value="UniProtKB-EC"/>
</dbReference>
<dbReference type="GO" id="GO:0004713">
    <property type="term" value="F:protein tyrosine kinase activity"/>
    <property type="evidence" value="ECO:0007669"/>
    <property type="project" value="UniProtKB-KW"/>
</dbReference>
<dbReference type="GO" id="GO:0034599">
    <property type="term" value="P:cellular response to oxidative stress"/>
    <property type="evidence" value="ECO:0000315"/>
    <property type="project" value="PomBase"/>
</dbReference>
<dbReference type="GO" id="GO:2000134">
    <property type="term" value="P:negative regulation of G1/S transition of mitotic cell cycle"/>
    <property type="evidence" value="ECO:0000315"/>
    <property type="project" value="PomBase"/>
</dbReference>
<dbReference type="GO" id="GO:0000122">
    <property type="term" value="P:negative regulation of transcription by RNA polymerase II"/>
    <property type="evidence" value="ECO:0000315"/>
    <property type="project" value="PomBase"/>
</dbReference>
<dbReference type="GO" id="GO:0048026">
    <property type="term" value="P:positive regulation of mRNA splicing, via spliceosome"/>
    <property type="evidence" value="ECO:0000315"/>
    <property type="project" value="PomBase"/>
</dbReference>
<dbReference type="GO" id="GO:0043484">
    <property type="term" value="P:regulation of RNA splicing"/>
    <property type="evidence" value="ECO:0000318"/>
    <property type="project" value="GO_Central"/>
</dbReference>
<dbReference type="GO" id="GO:0000920">
    <property type="term" value="P:septum digestion after cytokinesis"/>
    <property type="evidence" value="ECO:0000315"/>
    <property type="project" value="PomBase"/>
</dbReference>
<dbReference type="GO" id="GO:0023052">
    <property type="term" value="P:signaling"/>
    <property type="evidence" value="ECO:0000303"/>
    <property type="project" value="PomBase"/>
</dbReference>
<dbReference type="CDD" id="cd14134">
    <property type="entry name" value="PKc_CLK"/>
    <property type="match status" value="1"/>
</dbReference>
<dbReference type="FunFam" id="1.10.510.10:FF:000612">
    <property type="entry name" value="Serine/threonine-protein kinase AFC2"/>
    <property type="match status" value="1"/>
</dbReference>
<dbReference type="Gene3D" id="3.30.200.20">
    <property type="entry name" value="Phosphorylase Kinase, domain 1"/>
    <property type="match status" value="1"/>
</dbReference>
<dbReference type="Gene3D" id="1.10.510.10">
    <property type="entry name" value="Transferase(Phosphotransferase) domain 1"/>
    <property type="match status" value="1"/>
</dbReference>
<dbReference type="InterPro" id="IPR051175">
    <property type="entry name" value="CLK_kinases"/>
</dbReference>
<dbReference type="InterPro" id="IPR011009">
    <property type="entry name" value="Kinase-like_dom_sf"/>
</dbReference>
<dbReference type="InterPro" id="IPR000719">
    <property type="entry name" value="Prot_kinase_dom"/>
</dbReference>
<dbReference type="InterPro" id="IPR017441">
    <property type="entry name" value="Protein_kinase_ATP_BS"/>
</dbReference>
<dbReference type="InterPro" id="IPR008271">
    <property type="entry name" value="Ser/Thr_kinase_AS"/>
</dbReference>
<dbReference type="PANTHER" id="PTHR45646">
    <property type="entry name" value="SERINE/THREONINE-PROTEIN KINASE DOA-RELATED"/>
    <property type="match status" value="1"/>
</dbReference>
<dbReference type="PANTHER" id="PTHR45646:SF11">
    <property type="entry name" value="SERINE_THREONINE-PROTEIN KINASE DOA"/>
    <property type="match status" value="1"/>
</dbReference>
<dbReference type="Pfam" id="PF00069">
    <property type="entry name" value="Pkinase"/>
    <property type="match status" value="1"/>
</dbReference>
<dbReference type="SMART" id="SM00220">
    <property type="entry name" value="S_TKc"/>
    <property type="match status" value="1"/>
</dbReference>
<dbReference type="SUPFAM" id="SSF56112">
    <property type="entry name" value="Protein kinase-like (PK-like)"/>
    <property type="match status" value="1"/>
</dbReference>
<dbReference type="PROSITE" id="PS00107">
    <property type="entry name" value="PROTEIN_KINASE_ATP"/>
    <property type="match status" value="1"/>
</dbReference>
<dbReference type="PROSITE" id="PS50011">
    <property type="entry name" value="PROTEIN_KINASE_DOM"/>
    <property type="match status" value="1"/>
</dbReference>
<dbReference type="PROSITE" id="PS00108">
    <property type="entry name" value="PROTEIN_KINASE_ST"/>
    <property type="match status" value="1"/>
</dbReference>